<proteinExistence type="inferred from homology"/>
<evidence type="ECO:0000250" key="1"/>
<evidence type="ECO:0000305" key="2"/>
<reference key="1">
    <citation type="journal article" date="2002" name="Nature">
        <title>Sequence and analysis of rice chromosome 4.</title>
        <authorList>
            <person name="Feng Q."/>
            <person name="Zhang Y."/>
            <person name="Hao P."/>
            <person name="Wang S."/>
            <person name="Fu G."/>
            <person name="Huang Y."/>
            <person name="Li Y."/>
            <person name="Zhu J."/>
            <person name="Liu Y."/>
            <person name="Hu X."/>
            <person name="Jia P."/>
            <person name="Zhang Y."/>
            <person name="Zhao Q."/>
            <person name="Ying K."/>
            <person name="Yu S."/>
            <person name="Tang Y."/>
            <person name="Weng Q."/>
            <person name="Zhang L."/>
            <person name="Lu Y."/>
            <person name="Mu J."/>
            <person name="Lu Y."/>
            <person name="Zhang L.S."/>
            <person name="Yu Z."/>
            <person name="Fan D."/>
            <person name="Liu X."/>
            <person name="Lu T."/>
            <person name="Li C."/>
            <person name="Wu Y."/>
            <person name="Sun T."/>
            <person name="Lei H."/>
            <person name="Li T."/>
            <person name="Hu H."/>
            <person name="Guan J."/>
            <person name="Wu M."/>
            <person name="Zhang R."/>
            <person name="Zhou B."/>
            <person name="Chen Z."/>
            <person name="Chen L."/>
            <person name="Jin Z."/>
            <person name="Wang R."/>
            <person name="Yin H."/>
            <person name="Cai Z."/>
            <person name="Ren S."/>
            <person name="Lv G."/>
            <person name="Gu W."/>
            <person name="Zhu G."/>
            <person name="Tu Y."/>
            <person name="Jia J."/>
            <person name="Zhang Y."/>
            <person name="Chen J."/>
            <person name="Kang H."/>
            <person name="Chen X."/>
            <person name="Shao C."/>
            <person name="Sun Y."/>
            <person name="Hu Q."/>
            <person name="Zhang X."/>
            <person name="Zhang W."/>
            <person name="Wang L."/>
            <person name="Ding C."/>
            <person name="Sheng H."/>
            <person name="Gu J."/>
            <person name="Chen S."/>
            <person name="Ni L."/>
            <person name="Zhu F."/>
            <person name="Chen W."/>
            <person name="Lan L."/>
            <person name="Lai Y."/>
            <person name="Cheng Z."/>
            <person name="Gu M."/>
            <person name="Jiang J."/>
            <person name="Li J."/>
            <person name="Hong G."/>
            <person name="Xue Y."/>
            <person name="Han B."/>
        </authorList>
    </citation>
    <scope>NUCLEOTIDE SEQUENCE [LARGE SCALE GENOMIC DNA]</scope>
    <source>
        <strain>cv. Nipponbare</strain>
    </source>
</reference>
<reference key="2">
    <citation type="journal article" date="2005" name="Nature">
        <title>The map-based sequence of the rice genome.</title>
        <authorList>
            <consortium name="International rice genome sequencing project (IRGSP)"/>
        </authorList>
    </citation>
    <scope>NUCLEOTIDE SEQUENCE [LARGE SCALE GENOMIC DNA]</scope>
    <source>
        <strain>cv. Nipponbare</strain>
    </source>
</reference>
<reference key="3">
    <citation type="journal article" date="2013" name="Rice">
        <title>Improvement of the Oryza sativa Nipponbare reference genome using next generation sequence and optical map data.</title>
        <authorList>
            <person name="Kawahara Y."/>
            <person name="de la Bastide M."/>
            <person name="Hamilton J.P."/>
            <person name="Kanamori H."/>
            <person name="McCombie W.R."/>
            <person name="Ouyang S."/>
            <person name="Schwartz D.C."/>
            <person name="Tanaka T."/>
            <person name="Wu J."/>
            <person name="Zhou S."/>
            <person name="Childs K.L."/>
            <person name="Davidson R.M."/>
            <person name="Lin H."/>
            <person name="Quesada-Ocampo L."/>
            <person name="Vaillancourt B."/>
            <person name="Sakai H."/>
            <person name="Lee S.S."/>
            <person name="Kim J."/>
            <person name="Numa H."/>
            <person name="Itoh T."/>
            <person name="Buell C.R."/>
            <person name="Matsumoto T."/>
        </authorList>
    </citation>
    <scope>GENOME REANNOTATION</scope>
    <source>
        <strain>cv. Nipponbare</strain>
    </source>
</reference>
<sequence length="1441" mass="158262">MSYAAYKMMHWPTGVDHCAAGFVTHSPSDAAAFFTAATVGPGPEGDIDSAAAASRPRRLGPSPNLVVAAANVLEVYAVRAETAAEDGGGGTQPSSSSGAVLDGISGARLELVCYYRLHGNIESMTVLSDGAENRRATIALAFKDAKITCLEFDDAIHGLRTSSMHCFEGPEWQHLKRGRESFAWGPVIKADPLGRCGAALAYGLQMIILKAAQVGHSLVGEDEPTCALSSTAVCIESSYLIDLRALDMNHVKDFAFVHGYIEPVLVILHEQEPTWAGRILSKHHTCMISAFSISMTLKQHPVIWSAANLPHDAYQLLAVPPPISGVLVICANSIHYHSQSTSCSLDLNNFSSHPDGSPEISKSNFQVELDAAKATWLSNDIVMFSTKAGEMLLLTVVYDGRVVQRLDLMKSKASVLSSAVTSIGNSFFFLGSRLGDSLLVQFSYCASKSVLQDLTNERSADIEGDLPFSKRLKRIPSDVLQDVTSVEELSFQNIIAPNSLESAQKISYIVRDALINVGPLKDFSYGLRANADPNAMGNAKQSNYELVCCSGHGKNGSLSVLQQSIRPDLITEVELPSCRGIWTVYYKSYRGQMAEDNEYHAYLIISLENRTMVLETGDDLGEVTETVDYFVQASTIAAGNLFGRRRVIQVYGKGARVLDGSFMTQELNFTTHASESSSSEALGVACASIADPYVLLKMVDGSVQLLIGDYCTCTLSVNAPSIFISSSERIAACTLYRDRGPEPWLTKTRSDAWLSTGIAEAIDGNGTSSHDQSDIYCIICYESGKLEIFEVPSFRCVFSVENFISGEALLVDKFSQLIYEDSTKERYDCTKASLKKEAGDSIRIVELAMHRWSGQFSRPFLFGLLNDGTLLCYHAFSYEASESNVKRVPLSPQGSADHHNASDSRLRNLRFHRVSIDITSREDIPTLGRPRITTFNNVGGYEGLFLSGTRPAWVMVCRQRLRVHPQLCDGPIEAFTVLHNVNCSHGFIYVTSQGFLKICQLPSAYNYDSYWPVQKVPLHGTPHQVTYYAEQSLYPLIVSVPVVRPLNQVLSSMADQESVHHMDNDVTSTDALHKTYTVDEFEVRILELEKPGGHWETKSTIPMQLFENALTVRIVTLHNTTTKENETLLAIGTAYVLGEDVAARGRVLLFSFTKSENSQNLVTEVYSKESKGAVSAVASLQGHLLIASGPKITLNKWTGAELTAVAFYDAPLHVVSLNIVKNFVLFGDIHKSIYFLSWKEQGSQLSLLAKDFGSLDCFATEFLIDGSTLSLVASDSDKNVQIFYYAPKMVESWKGQKLLSRAEFHVGAHITKFLRLQMLPTQGLSSEKTNRFALLFGNLDGGIGCIAPIDELTFRRLQSLQRKLVDAVPHVCGLNPRSFRQFHSNGKGHRPGPDNIIDFELLCSYEMLSLDEQLDVAQQIGTTRSQILSNFSDISLGTSFL</sequence>
<comment type="function">
    <text evidence="1">CPSF plays a key role in pre-mRNA 3'-end formation, recognizing the AAUAAA signal sequence and interacting with poly(A)polymerase and other factors to bring about cleavage and poly(A) addition. This subunit is involved in the RNA recognition step of the polyadenylation reaction (By similarity).</text>
</comment>
<comment type="subunit">
    <text evidence="1">CPSF is a heterotetramer composed of four distinct subunits 160, 100, 70 and 30 kDa.</text>
</comment>
<comment type="subcellular location">
    <subcellularLocation>
        <location evidence="1">Nucleus</location>
    </subcellularLocation>
</comment>
<comment type="similarity">
    <text evidence="2">Belongs to the CPSF1 family.</text>
</comment>
<gene>
    <name type="ordered locus">Os04g0252200</name>
    <name type="ordered locus">LOC_Os04g18010</name>
    <name type="ORF">OSJNBa0032B23.5</name>
</gene>
<organism>
    <name type="scientific">Oryza sativa subsp. japonica</name>
    <name type="common">Rice</name>
    <dbReference type="NCBI Taxonomy" id="39947"/>
    <lineage>
        <taxon>Eukaryota</taxon>
        <taxon>Viridiplantae</taxon>
        <taxon>Streptophyta</taxon>
        <taxon>Embryophyta</taxon>
        <taxon>Tracheophyta</taxon>
        <taxon>Spermatophyta</taxon>
        <taxon>Magnoliopsida</taxon>
        <taxon>Liliopsida</taxon>
        <taxon>Poales</taxon>
        <taxon>Poaceae</taxon>
        <taxon>BOP clade</taxon>
        <taxon>Oryzoideae</taxon>
        <taxon>Oryzeae</taxon>
        <taxon>Oryzinae</taxon>
        <taxon>Oryza</taxon>
        <taxon>Oryza sativa</taxon>
    </lineage>
</organism>
<accession>Q7XWP1</accession>
<protein>
    <recommendedName>
        <fullName>Probable cleavage and polyadenylation specificity factor subunit 1</fullName>
    </recommendedName>
    <alternativeName>
        <fullName>Cleavage and polyadenylation specificity factor 160 kDa subunit</fullName>
        <shortName>CPSF 160 kDa subunit</shortName>
    </alternativeName>
</protein>
<dbReference type="EMBL" id="AL606991">
    <property type="protein sequence ID" value="CAD39979.2"/>
    <property type="molecule type" value="Genomic_DNA"/>
</dbReference>
<dbReference type="EMBL" id="AP014960">
    <property type="status" value="NOT_ANNOTATED_CDS"/>
    <property type="molecule type" value="Genomic_DNA"/>
</dbReference>
<dbReference type="SMR" id="Q7XWP1"/>
<dbReference type="FunCoup" id="Q7XWP1">
    <property type="interactions" value="2116"/>
</dbReference>
<dbReference type="STRING" id="39947.Q7XWP1"/>
<dbReference type="PaxDb" id="39947-Q7XWP1"/>
<dbReference type="eggNOG" id="KOG1896">
    <property type="taxonomic scope" value="Eukaryota"/>
</dbReference>
<dbReference type="InParanoid" id="Q7XWP1"/>
<dbReference type="Proteomes" id="UP000000763">
    <property type="component" value="Chromosome 4"/>
</dbReference>
<dbReference type="Proteomes" id="UP000059680">
    <property type="component" value="Chromosome 4"/>
</dbReference>
<dbReference type="GO" id="GO:0005634">
    <property type="term" value="C:nucleus"/>
    <property type="evidence" value="ECO:0000318"/>
    <property type="project" value="GO_Central"/>
</dbReference>
<dbReference type="GO" id="GO:0003723">
    <property type="term" value="F:RNA binding"/>
    <property type="evidence" value="ECO:0007669"/>
    <property type="project" value="UniProtKB-KW"/>
</dbReference>
<dbReference type="GO" id="GO:0006397">
    <property type="term" value="P:mRNA processing"/>
    <property type="evidence" value="ECO:0007669"/>
    <property type="project" value="UniProtKB-KW"/>
</dbReference>
<dbReference type="FunFam" id="2.130.10.10:FF:000402">
    <property type="entry name" value="Cleavage and polyadenylation specificity factor subunit 1"/>
    <property type="match status" value="1"/>
</dbReference>
<dbReference type="FunFam" id="2.130.10.10:FF:000437">
    <property type="entry name" value="cleavage and polyadenylation specificity factor subunit 1"/>
    <property type="match status" value="1"/>
</dbReference>
<dbReference type="Gene3D" id="2.130.10.10">
    <property type="entry name" value="YVTN repeat-like/Quinoprotein amine dehydrogenase"/>
    <property type="match status" value="2"/>
</dbReference>
<dbReference type="InterPro" id="IPR018846">
    <property type="entry name" value="Beta-prop_RSE1/DDB1/CPSF1_1st"/>
</dbReference>
<dbReference type="InterPro" id="IPR004871">
    <property type="entry name" value="Cleavage/polyA-sp_fac_asu_C"/>
</dbReference>
<dbReference type="InterPro" id="IPR050358">
    <property type="entry name" value="RSE1/DDB1/CFT1/CPSF1"/>
</dbReference>
<dbReference type="InterPro" id="IPR015943">
    <property type="entry name" value="WD40/YVTN_repeat-like_dom_sf"/>
</dbReference>
<dbReference type="PANTHER" id="PTHR10644">
    <property type="entry name" value="DNA REPAIR/RNA PROCESSING CPSF FAMILY"/>
    <property type="match status" value="1"/>
</dbReference>
<dbReference type="Pfam" id="PF10433">
    <property type="entry name" value="Beta-prop_RSE1_1st"/>
    <property type="match status" value="1"/>
</dbReference>
<dbReference type="Pfam" id="PF23726">
    <property type="entry name" value="Beta-prop_RSE1_2nd"/>
    <property type="match status" value="1"/>
</dbReference>
<dbReference type="Pfam" id="PF03178">
    <property type="entry name" value="CPSF_A"/>
    <property type="match status" value="1"/>
</dbReference>
<name>CPSF1_ORYSJ</name>
<keyword id="KW-0507">mRNA processing</keyword>
<keyword id="KW-0539">Nucleus</keyword>
<keyword id="KW-1185">Reference proteome</keyword>
<keyword id="KW-0694">RNA-binding</keyword>
<feature type="chain" id="PRO_0000247466" description="Probable cleavage and polyadenylation specificity factor subunit 1">
    <location>
        <begin position="1"/>
        <end position="1441"/>
    </location>
</feature>